<organism>
    <name type="scientific">Influenza A virus (strain A/Port Chalmers/1/1973 H3N2)</name>
    <dbReference type="NCBI Taxonomy" id="385624"/>
    <lineage>
        <taxon>Viruses</taxon>
        <taxon>Riboviria</taxon>
        <taxon>Orthornavirae</taxon>
        <taxon>Negarnaviricota</taxon>
        <taxon>Polyploviricotina</taxon>
        <taxon>Insthoviricetes</taxon>
        <taxon>Articulavirales</taxon>
        <taxon>Orthomyxoviridae</taxon>
        <taxon>Alphainfluenzavirus</taxon>
        <taxon>Alphainfluenzavirus influenzae</taxon>
        <taxon>Influenza A virus</taxon>
    </lineage>
</organism>
<reference key="1">
    <citation type="submission" date="2006-04" db="EMBL/GenBank/DDBJ databases">
        <title>The NIAID influenza genome sequencing project.</title>
        <authorList>
            <person name="Spiro D."/>
            <person name="Ghedin E."/>
            <person name="Sengamalay N."/>
            <person name="Halpin R."/>
            <person name="Boyne A."/>
            <person name="Zaborsky J."/>
            <person name="Feldblyum T."/>
            <person name="Subbu V."/>
            <person name="Sparenborg J."/>
            <person name="Shumway M."/>
            <person name="Sitz J."/>
            <person name="Katzel D."/>
            <person name="Koo H."/>
            <person name="Salzberg S.L."/>
            <person name="Griesemer S."/>
            <person name="St George K."/>
            <person name="Bennett R."/>
            <person name="Taylor J."/>
            <person name="Bennink J.R."/>
            <person name="Yewdell J.W."/>
            <person name="Bao Y."/>
            <person name="Bolotov P."/>
            <person name="Dernovoy D."/>
            <person name="Kiryutin B."/>
            <person name="Lipman D.J."/>
            <person name="Tatusova T."/>
        </authorList>
    </citation>
    <scope>NUCLEOTIDE SEQUENCE [GENOMIC RNA]</scope>
</reference>
<accession>P0DJT9</accession>
<protein>
    <recommendedName>
        <fullName>Protein PA-X</fullName>
    </recommendedName>
</protein>
<sequence length="252" mass="29377">MEDFVRQCFNPMVVELAEKAMKEYGEDLKIETNKFAAICTHLEVCFMYSDFHFINEQGESIVVELDDPNALLKHRFEIIEGRDRTMAWTVVNSICNTTGAEKPKFLPDLYDYKENRFIEIGVTRREVHIYYLEKANKIKSENTHIHIFSFTGEEMATKADYTLDEESRARIKTRLFTIRQEMANRGLWDSFVSPKEAKKQLKKDLKSQELCAGLPTKVSRRTSPALRILEPMWMDSNRTAALRASFLKCPKK</sequence>
<dbReference type="EMBL" id="CY009353">
    <property type="status" value="NOT_ANNOTATED_CDS"/>
    <property type="molecule type" value="Genomic_RNA"/>
</dbReference>
<dbReference type="SMR" id="P0DJT9"/>
<dbReference type="Proteomes" id="UP000133870">
    <property type="component" value="Genome"/>
</dbReference>
<dbReference type="GO" id="GO:0003723">
    <property type="term" value="F:RNA binding"/>
    <property type="evidence" value="ECO:0007669"/>
    <property type="project" value="InterPro"/>
</dbReference>
<dbReference type="GO" id="GO:0039694">
    <property type="term" value="P:viral RNA genome replication"/>
    <property type="evidence" value="ECO:0007669"/>
    <property type="project" value="InterPro"/>
</dbReference>
<dbReference type="GO" id="GO:0075523">
    <property type="term" value="P:viral translational frameshifting"/>
    <property type="evidence" value="ECO:0007669"/>
    <property type="project" value="UniProtKB-KW"/>
</dbReference>
<dbReference type="FunFam" id="3.40.91.90:FF:000001">
    <property type="entry name" value="Polymerase acidic protein"/>
    <property type="match status" value="1"/>
</dbReference>
<dbReference type="Gene3D" id="3.40.91.90">
    <property type="entry name" value="Influenza RNA-dependent RNA polymerase subunit PA, endonuclease domain"/>
    <property type="match status" value="1"/>
</dbReference>
<dbReference type="InterPro" id="IPR001009">
    <property type="entry name" value="PA/PA-X"/>
</dbReference>
<dbReference type="InterPro" id="IPR038372">
    <property type="entry name" value="PA/PA-X_sf"/>
</dbReference>
<dbReference type="Pfam" id="PF00603">
    <property type="entry name" value="Flu_PA"/>
    <property type="match status" value="1"/>
</dbReference>
<organismHost>
    <name type="scientific">Aves</name>
    <dbReference type="NCBI Taxonomy" id="8782"/>
</organismHost>
<organismHost>
    <name type="scientific">Cetacea</name>
    <name type="common">whales</name>
    <dbReference type="NCBI Taxonomy" id="9721"/>
</organismHost>
<organismHost>
    <name type="scientific">Homo sapiens</name>
    <name type="common">Human</name>
    <dbReference type="NCBI Taxonomy" id="9606"/>
</organismHost>
<organismHost>
    <name type="scientific">Phocidae</name>
    <name type="common">true seals</name>
    <dbReference type="NCBI Taxonomy" id="9709"/>
</organismHost>
<organismHost>
    <name type="scientific">Sus scrofa</name>
    <name type="common">Pig</name>
    <dbReference type="NCBI Taxonomy" id="9823"/>
</organismHost>
<keyword id="KW-1132">Decay of host mRNAs by virus</keyword>
<keyword id="KW-1262">Eukaryotic host gene expression shutoff by virus</keyword>
<keyword id="KW-1035">Host cytoplasm</keyword>
<keyword id="KW-1190">Host gene expression shutoff by virus</keyword>
<keyword id="KW-1192">Host mRNA suppression by virus</keyword>
<keyword id="KW-1048">Host nucleus</keyword>
<keyword id="KW-0945">Host-virus interaction</keyword>
<keyword id="KW-0688">Ribosomal frameshifting</keyword>
<comment type="function">
    <text evidence="1 4">Plays a major role in the shutoff of the host protein expression by cleaving mRNAs probably via an endonuclease activity. This host shutoff allows the virus to escape from the host antiviral response (By similarity). Hijacks host RNA splicing machinery to selectively target host RNAs containing introns for destruction. This may explain the preferential degradation of RNAs that have undergone co- or post-transcriptional processing (By similarity).</text>
</comment>
<comment type="subcellular location">
    <subcellularLocation>
        <location evidence="4">Host cytoplasm</location>
    </subcellularLocation>
    <subcellularLocation>
        <location evidence="4">Host nucleus</location>
    </subcellularLocation>
</comment>
<comment type="alternative products">
    <event type="ribosomal frameshifting"/>
    <isoform>
        <id>P0DJT9-1</id>
        <name>PA-X</name>
        <sequence type="displayed"/>
    </isoform>
    <isoform>
        <id>Q1PUD2-1</id>
        <name>PA</name>
        <sequence type="external"/>
    </isoform>
</comment>
<comment type="domain">
    <text evidence="1 4">The probable endonuclease active site in the N-terminus and the basic amino acid cluster in the C-terminus are important for the shutoff activity. The C-terminus acts as a nuclear localization signal (By similarity). The C-terminus is recruited to host protein complexes involved in nuclear Pol II RNA processing (By similarity).</text>
</comment>
<comment type="similarity">
    <text evidence="6">Belongs to the influenza viruses PA-X family.</text>
</comment>
<evidence type="ECO:0000250" key="1">
    <source>
        <dbReference type="UniProtKB" id="P0CK64"/>
    </source>
</evidence>
<evidence type="ECO:0000250" key="2">
    <source>
        <dbReference type="UniProtKB" id="P0CK68"/>
    </source>
</evidence>
<evidence type="ECO:0000250" key="3">
    <source>
        <dbReference type="UniProtKB" id="P0DJW8"/>
    </source>
</evidence>
<evidence type="ECO:0000250" key="4">
    <source>
        <dbReference type="UniProtKB" id="P0DXO5"/>
    </source>
</evidence>
<evidence type="ECO:0000250" key="5">
    <source>
        <dbReference type="UniProtKB" id="P0DXO6"/>
    </source>
</evidence>
<evidence type="ECO:0000305" key="6"/>
<gene>
    <name type="primary">PA</name>
</gene>
<feature type="chain" id="PRO_0000419402" description="Protein PA-X">
    <location>
        <begin position="1"/>
        <end position="252"/>
    </location>
</feature>
<feature type="active site" evidence="2">
    <location>
        <position position="80"/>
    </location>
</feature>
<feature type="active site" evidence="2">
    <location>
        <position position="108"/>
    </location>
</feature>
<feature type="site" description="Important for efficient shutoff activity" evidence="5">
    <location>
        <position position="28"/>
    </location>
</feature>
<feature type="site" description="Important for efficient shutoff activity" evidence="5">
    <location>
        <position position="65"/>
    </location>
</feature>
<feature type="site" description="Important for efficient shutoff activity and nuclear localization" evidence="4">
    <location>
        <position position="195"/>
    </location>
</feature>
<feature type="site" description="Important for efficient shutoff activity and nuclear localization" evidence="4">
    <location>
        <position position="198"/>
    </location>
</feature>
<feature type="site" description="Important for efficient shutoff activity and nuclear localization" evidence="4">
    <location>
        <position position="199"/>
    </location>
</feature>
<feature type="site" description="Important for efficient shutoff activity" evidence="3">
    <location>
        <position position="202"/>
    </location>
</feature>
<feature type="site" description="Important for efficient shutoff activity" evidence="3">
    <location>
        <position position="203"/>
    </location>
</feature>
<feature type="site" description="Important for efficient shutoff activity" evidence="3">
    <location>
        <position position="206"/>
    </location>
</feature>
<proteinExistence type="inferred from homology"/>
<name>PAX_I73A5</name>